<proteinExistence type="inferred from homology"/>
<comment type="function">
    <text evidence="1">Part of the energy-coupling factor (ECF) transporter complex CbiMNOQ involved in cobalt import.</text>
</comment>
<comment type="pathway">
    <text evidence="1">Cofactor biosynthesis; adenosylcobalamin biosynthesis.</text>
</comment>
<comment type="subunit">
    <text evidence="1">Forms an energy-coupling factor (ECF) transporter complex composed of an ATP-binding protein (A component, CbiO), a transmembrane protein (T component, CbiQ) and 2 possible substrate-capture proteins (S components, CbiM and CbiN) of unknown stoichimetry.</text>
</comment>
<comment type="subcellular location">
    <subcellularLocation>
        <location evidence="1">Cell membrane</location>
        <topology evidence="1">Multi-pass membrane protein</topology>
    </subcellularLocation>
</comment>
<comment type="similarity">
    <text evidence="1">Belongs to the CbiM family.</text>
</comment>
<reference key="1">
    <citation type="journal article" date="2006" name="J. Bacteriol.">
        <title>The genome sequence of Methanosphaera stadtmanae reveals why this human intestinal archaeon is restricted to methanol and H2 for methane formation and ATP synthesis.</title>
        <authorList>
            <person name="Fricke W.F."/>
            <person name="Seedorf H."/>
            <person name="Henne A."/>
            <person name="Kruer M."/>
            <person name="Liesegang H."/>
            <person name="Hedderich R."/>
            <person name="Gottschalk G."/>
            <person name="Thauer R.K."/>
        </authorList>
    </citation>
    <scope>NUCLEOTIDE SEQUENCE [LARGE SCALE GENOMIC DNA]</scope>
    <source>
        <strain>ATCC 43021 / DSM 3091 / JCM 11832 / MCB-3</strain>
    </source>
</reference>
<sequence length="224" mass="24277">MHIMEGFLPPLWCLIYYIICIPFIVYGIMQIRKVTAESDEAMPMLALSGAFMFILSSLKMPSVTGSCSHPCGNGFGAVFFGPAVVGVLSVIVLVFQAVILAHGGITTLGANVLSMGIIGPLCGYAVWLGLRKLNVNDEIAMFFTAFVADLMTYVVTAIELSLAFPKPDFFTALVTFLGIFAVTQIPLAIAEGILTMVIYRFIKQQKPDILVKLRVISKEEAGVN</sequence>
<name>CBIM_METST</name>
<protein>
    <recommendedName>
        <fullName evidence="1">Putative cobalt transport protein CbiM</fullName>
    </recommendedName>
    <alternativeName>
        <fullName evidence="1">Energy-coupling factor transporter probable substrate-capture protein CbiM</fullName>
        <shortName evidence="1">ECF transporter S component CbiM</shortName>
    </alternativeName>
</protein>
<dbReference type="EMBL" id="CP000102">
    <property type="protein sequence ID" value="ABC56799.1"/>
    <property type="molecule type" value="Genomic_DNA"/>
</dbReference>
<dbReference type="RefSeq" id="WP_011405999.1">
    <property type="nucleotide sequence ID" value="NC_007681.1"/>
</dbReference>
<dbReference type="SMR" id="Q2NHA4"/>
<dbReference type="STRING" id="339860.Msp_0398"/>
<dbReference type="KEGG" id="mst:Msp_0398"/>
<dbReference type="eggNOG" id="arCOG02248">
    <property type="taxonomic scope" value="Archaea"/>
</dbReference>
<dbReference type="HOGENOM" id="CLU_052508_3_0_2"/>
<dbReference type="OrthoDB" id="30946at2157"/>
<dbReference type="UniPathway" id="UPA00148"/>
<dbReference type="Proteomes" id="UP000001931">
    <property type="component" value="Chromosome"/>
</dbReference>
<dbReference type="GO" id="GO:0043190">
    <property type="term" value="C:ATP-binding cassette (ABC) transporter complex"/>
    <property type="evidence" value="ECO:0007669"/>
    <property type="project" value="InterPro"/>
</dbReference>
<dbReference type="GO" id="GO:0015087">
    <property type="term" value="F:cobalt ion transmembrane transporter activity"/>
    <property type="evidence" value="ECO:0007669"/>
    <property type="project" value="UniProtKB-UniRule"/>
</dbReference>
<dbReference type="GO" id="GO:0009236">
    <property type="term" value="P:cobalamin biosynthetic process"/>
    <property type="evidence" value="ECO:0007669"/>
    <property type="project" value="UniProtKB-UniRule"/>
</dbReference>
<dbReference type="FunFam" id="1.10.1760.20:FF:000001">
    <property type="entry name" value="Cobalt transport protein CbiM"/>
    <property type="match status" value="1"/>
</dbReference>
<dbReference type="Gene3D" id="1.10.1760.20">
    <property type="match status" value="1"/>
</dbReference>
<dbReference type="HAMAP" id="MF_01462">
    <property type="entry name" value="CbiM"/>
    <property type="match status" value="1"/>
</dbReference>
<dbReference type="InterPro" id="IPR018024">
    <property type="entry name" value="CbiM"/>
</dbReference>
<dbReference type="InterPro" id="IPR002751">
    <property type="entry name" value="CbiM/NikMN"/>
</dbReference>
<dbReference type="NCBIfam" id="TIGR00123">
    <property type="entry name" value="cbiM"/>
    <property type="match status" value="1"/>
</dbReference>
<dbReference type="NCBIfam" id="NF006184">
    <property type="entry name" value="PRK08319.1"/>
    <property type="match status" value="1"/>
</dbReference>
<dbReference type="PANTHER" id="PTHR43627">
    <property type="match status" value="1"/>
</dbReference>
<dbReference type="PANTHER" id="PTHR43627:SF1">
    <property type="entry name" value="COBALT TRANSPORT PROTEIN CBIM"/>
    <property type="match status" value="1"/>
</dbReference>
<dbReference type="Pfam" id="PF01891">
    <property type="entry name" value="CbiM"/>
    <property type="match status" value="1"/>
</dbReference>
<evidence type="ECO:0000255" key="1">
    <source>
        <dbReference type="HAMAP-Rule" id="MF_01462"/>
    </source>
</evidence>
<organism>
    <name type="scientific">Methanosphaera stadtmanae (strain ATCC 43021 / DSM 3091 / JCM 11832 / MCB-3)</name>
    <dbReference type="NCBI Taxonomy" id="339860"/>
    <lineage>
        <taxon>Archaea</taxon>
        <taxon>Methanobacteriati</taxon>
        <taxon>Methanobacteriota</taxon>
        <taxon>Methanomada group</taxon>
        <taxon>Methanobacteria</taxon>
        <taxon>Methanobacteriales</taxon>
        <taxon>Methanobacteriaceae</taxon>
        <taxon>Methanosphaera</taxon>
    </lineage>
</organism>
<feature type="chain" id="PRO_0000411160" description="Putative cobalt transport protein CbiM">
    <location>
        <begin position="1"/>
        <end position="224"/>
    </location>
</feature>
<feature type="transmembrane region" description="Helical" evidence="1">
    <location>
        <begin position="8"/>
        <end position="28"/>
    </location>
</feature>
<feature type="transmembrane region" description="Helical" evidence="1">
    <location>
        <begin position="41"/>
        <end position="61"/>
    </location>
</feature>
<feature type="transmembrane region" description="Helical" evidence="1">
    <location>
        <begin position="75"/>
        <end position="95"/>
    </location>
</feature>
<feature type="transmembrane region" description="Helical" evidence="1">
    <location>
        <begin position="108"/>
        <end position="128"/>
    </location>
</feature>
<feature type="transmembrane region" description="Helical" evidence="1">
    <location>
        <begin position="138"/>
        <end position="158"/>
    </location>
</feature>
<feature type="transmembrane region" description="Helical" evidence="1">
    <location>
        <begin position="169"/>
        <end position="189"/>
    </location>
</feature>
<accession>Q2NHA4</accession>
<keyword id="KW-1003">Cell membrane</keyword>
<keyword id="KW-0169">Cobalamin biosynthesis</keyword>
<keyword id="KW-0170">Cobalt</keyword>
<keyword id="KW-0171">Cobalt transport</keyword>
<keyword id="KW-0406">Ion transport</keyword>
<keyword id="KW-0472">Membrane</keyword>
<keyword id="KW-1185">Reference proteome</keyword>
<keyword id="KW-0812">Transmembrane</keyword>
<keyword id="KW-1133">Transmembrane helix</keyword>
<keyword id="KW-0813">Transport</keyword>
<gene>
    <name evidence="1" type="primary">cbiM</name>
    <name type="ordered locus">Msp_0398</name>
</gene>